<name>SYE_NITMU</name>
<comment type="function">
    <text evidence="1">Catalyzes the attachment of glutamate to tRNA(Glu) in a two-step reaction: glutamate is first activated by ATP to form Glu-AMP and then transferred to the acceptor end of tRNA(Glu).</text>
</comment>
<comment type="catalytic activity">
    <reaction evidence="1">
        <text>tRNA(Glu) + L-glutamate + ATP = L-glutamyl-tRNA(Glu) + AMP + diphosphate</text>
        <dbReference type="Rhea" id="RHEA:23540"/>
        <dbReference type="Rhea" id="RHEA-COMP:9663"/>
        <dbReference type="Rhea" id="RHEA-COMP:9680"/>
        <dbReference type="ChEBI" id="CHEBI:29985"/>
        <dbReference type="ChEBI" id="CHEBI:30616"/>
        <dbReference type="ChEBI" id="CHEBI:33019"/>
        <dbReference type="ChEBI" id="CHEBI:78442"/>
        <dbReference type="ChEBI" id="CHEBI:78520"/>
        <dbReference type="ChEBI" id="CHEBI:456215"/>
        <dbReference type="EC" id="6.1.1.17"/>
    </reaction>
</comment>
<comment type="subunit">
    <text evidence="1">Monomer.</text>
</comment>
<comment type="subcellular location">
    <subcellularLocation>
        <location evidence="1">Cytoplasm</location>
    </subcellularLocation>
</comment>
<comment type="similarity">
    <text evidence="1">Belongs to the class-I aminoacyl-tRNA synthetase family. Glutamate--tRNA ligase type 1 subfamily.</text>
</comment>
<feature type="chain" id="PRO_0000237379" description="Glutamate--tRNA ligase">
    <location>
        <begin position="1"/>
        <end position="465"/>
    </location>
</feature>
<feature type="short sequence motif" description="'HIGH' region" evidence="1">
    <location>
        <begin position="8"/>
        <end position="18"/>
    </location>
</feature>
<feature type="short sequence motif" description="'KMSKS' region" evidence="1">
    <location>
        <begin position="236"/>
        <end position="240"/>
    </location>
</feature>
<feature type="binding site" evidence="1">
    <location>
        <position position="239"/>
    </location>
    <ligand>
        <name>ATP</name>
        <dbReference type="ChEBI" id="CHEBI:30616"/>
    </ligand>
</feature>
<protein>
    <recommendedName>
        <fullName evidence="1">Glutamate--tRNA ligase</fullName>
        <ecNumber evidence="1">6.1.1.17</ecNumber>
    </recommendedName>
    <alternativeName>
        <fullName evidence="1">Glutamyl-tRNA synthetase</fullName>
        <shortName evidence="1">GluRS</shortName>
    </alternativeName>
</protein>
<evidence type="ECO:0000255" key="1">
    <source>
        <dbReference type="HAMAP-Rule" id="MF_00022"/>
    </source>
</evidence>
<dbReference type="EC" id="6.1.1.17" evidence="1"/>
<dbReference type="EMBL" id="CP000103">
    <property type="protein sequence ID" value="ABB74905.1"/>
    <property type="molecule type" value="Genomic_DNA"/>
</dbReference>
<dbReference type="RefSeq" id="WP_011380932.1">
    <property type="nucleotide sequence ID" value="NC_007614.1"/>
</dbReference>
<dbReference type="SMR" id="Q2Y8L6"/>
<dbReference type="STRING" id="323848.Nmul_A1604"/>
<dbReference type="KEGG" id="nmu:Nmul_A1604"/>
<dbReference type="eggNOG" id="COG0008">
    <property type="taxonomic scope" value="Bacteria"/>
</dbReference>
<dbReference type="HOGENOM" id="CLU_015768_6_0_4"/>
<dbReference type="OrthoDB" id="9807503at2"/>
<dbReference type="Proteomes" id="UP000002718">
    <property type="component" value="Chromosome"/>
</dbReference>
<dbReference type="GO" id="GO:0005829">
    <property type="term" value="C:cytosol"/>
    <property type="evidence" value="ECO:0007669"/>
    <property type="project" value="TreeGrafter"/>
</dbReference>
<dbReference type="GO" id="GO:0005524">
    <property type="term" value="F:ATP binding"/>
    <property type="evidence" value="ECO:0007669"/>
    <property type="project" value="UniProtKB-UniRule"/>
</dbReference>
<dbReference type="GO" id="GO:0004818">
    <property type="term" value="F:glutamate-tRNA ligase activity"/>
    <property type="evidence" value="ECO:0007669"/>
    <property type="project" value="UniProtKB-UniRule"/>
</dbReference>
<dbReference type="GO" id="GO:0000049">
    <property type="term" value="F:tRNA binding"/>
    <property type="evidence" value="ECO:0007669"/>
    <property type="project" value="InterPro"/>
</dbReference>
<dbReference type="GO" id="GO:0008270">
    <property type="term" value="F:zinc ion binding"/>
    <property type="evidence" value="ECO:0007669"/>
    <property type="project" value="InterPro"/>
</dbReference>
<dbReference type="GO" id="GO:0006424">
    <property type="term" value="P:glutamyl-tRNA aminoacylation"/>
    <property type="evidence" value="ECO:0007669"/>
    <property type="project" value="UniProtKB-UniRule"/>
</dbReference>
<dbReference type="CDD" id="cd00808">
    <property type="entry name" value="GluRS_core"/>
    <property type="match status" value="1"/>
</dbReference>
<dbReference type="FunFam" id="3.40.50.620:FF:000007">
    <property type="entry name" value="Glutamate--tRNA ligase"/>
    <property type="match status" value="1"/>
</dbReference>
<dbReference type="Gene3D" id="1.10.10.350">
    <property type="match status" value="1"/>
</dbReference>
<dbReference type="Gene3D" id="1.10.8.70">
    <property type="entry name" value="Glutamate-tRNA synthetase, class I, anticodon-binding domain 1"/>
    <property type="match status" value="1"/>
</dbReference>
<dbReference type="Gene3D" id="3.40.50.620">
    <property type="entry name" value="HUPs"/>
    <property type="match status" value="1"/>
</dbReference>
<dbReference type="HAMAP" id="MF_00022">
    <property type="entry name" value="Glu_tRNA_synth_type1"/>
    <property type="match status" value="1"/>
</dbReference>
<dbReference type="InterPro" id="IPR045462">
    <property type="entry name" value="aa-tRNA-synth_I_cd-bd"/>
</dbReference>
<dbReference type="InterPro" id="IPR020751">
    <property type="entry name" value="aa-tRNA-synth_I_codon-bd_sub2"/>
</dbReference>
<dbReference type="InterPro" id="IPR001412">
    <property type="entry name" value="aa-tRNA-synth_I_CS"/>
</dbReference>
<dbReference type="InterPro" id="IPR008925">
    <property type="entry name" value="aa_tRNA-synth_I_cd-bd_sf"/>
</dbReference>
<dbReference type="InterPro" id="IPR004527">
    <property type="entry name" value="Glu-tRNA-ligase_bac/mito"/>
</dbReference>
<dbReference type="InterPro" id="IPR020752">
    <property type="entry name" value="Glu-tRNA-synth_I_codon-bd_sub1"/>
</dbReference>
<dbReference type="InterPro" id="IPR000924">
    <property type="entry name" value="Glu/Gln-tRNA-synth"/>
</dbReference>
<dbReference type="InterPro" id="IPR020058">
    <property type="entry name" value="Glu/Gln-tRNA-synth_Ib_cat-dom"/>
</dbReference>
<dbReference type="InterPro" id="IPR049940">
    <property type="entry name" value="GluQ/Sye"/>
</dbReference>
<dbReference type="InterPro" id="IPR033910">
    <property type="entry name" value="GluRS_core"/>
</dbReference>
<dbReference type="InterPro" id="IPR014729">
    <property type="entry name" value="Rossmann-like_a/b/a_fold"/>
</dbReference>
<dbReference type="NCBIfam" id="TIGR00464">
    <property type="entry name" value="gltX_bact"/>
    <property type="match status" value="1"/>
</dbReference>
<dbReference type="PANTHER" id="PTHR43311">
    <property type="entry name" value="GLUTAMATE--TRNA LIGASE"/>
    <property type="match status" value="1"/>
</dbReference>
<dbReference type="PANTHER" id="PTHR43311:SF2">
    <property type="entry name" value="GLUTAMATE--TRNA LIGASE, MITOCHONDRIAL-RELATED"/>
    <property type="match status" value="1"/>
</dbReference>
<dbReference type="Pfam" id="PF19269">
    <property type="entry name" value="Anticodon_2"/>
    <property type="match status" value="1"/>
</dbReference>
<dbReference type="Pfam" id="PF00749">
    <property type="entry name" value="tRNA-synt_1c"/>
    <property type="match status" value="1"/>
</dbReference>
<dbReference type="PRINTS" id="PR00987">
    <property type="entry name" value="TRNASYNTHGLU"/>
</dbReference>
<dbReference type="SUPFAM" id="SSF48163">
    <property type="entry name" value="An anticodon-binding domain of class I aminoacyl-tRNA synthetases"/>
    <property type="match status" value="1"/>
</dbReference>
<dbReference type="SUPFAM" id="SSF52374">
    <property type="entry name" value="Nucleotidylyl transferase"/>
    <property type="match status" value="1"/>
</dbReference>
<dbReference type="PROSITE" id="PS00178">
    <property type="entry name" value="AA_TRNA_LIGASE_I"/>
    <property type="match status" value="1"/>
</dbReference>
<reference key="1">
    <citation type="submission" date="2005-08" db="EMBL/GenBank/DDBJ databases">
        <title>Complete sequence of chromosome 1 of Nitrosospira multiformis ATCC 25196.</title>
        <authorList>
            <person name="Copeland A."/>
            <person name="Lucas S."/>
            <person name="Lapidus A."/>
            <person name="Barry K."/>
            <person name="Detter J.C."/>
            <person name="Glavina T."/>
            <person name="Hammon N."/>
            <person name="Israni S."/>
            <person name="Pitluck S."/>
            <person name="Chain P."/>
            <person name="Malfatti S."/>
            <person name="Shin M."/>
            <person name="Vergez L."/>
            <person name="Schmutz J."/>
            <person name="Larimer F."/>
            <person name="Land M."/>
            <person name="Hauser L."/>
            <person name="Kyrpides N."/>
            <person name="Lykidis A."/>
            <person name="Richardson P."/>
        </authorList>
    </citation>
    <scope>NUCLEOTIDE SEQUENCE [LARGE SCALE GENOMIC DNA]</scope>
    <source>
        <strain>ATCC 25196 / NCIMB 11849 / C 71</strain>
    </source>
</reference>
<sequence length="465" mass="52513">MIRTRFAPSPTGYLHIGGARTALFSWAYARKHGGKFVLRIEDTDLERSTAQSTQAILDGMAWLGLDYDEGPFYQMQRLARYHEVAEQLLRRGQAYYCYCSREELDAMREQQRAAGLKPRYDGRWRDSREEPPAGVKPVVRLKNPLDGEVTFKDLIKGEITVANSELDDLVLLRGDGVPTYNFGVVIDDLDMNITHVIRGDDHVNNTPRQINILKALGAPLPQYAHVPMILGADGERLSKRHGAVSVMQYREDGYLPEALVNYLARLGWSHGDEEIFSREQLVEWFDLSNINRSPAKFNPEKLQWLNQQYLKTADNERLAELVKPFLAADGCDVTGGGTPDLRKVMNLLKERVNTIAELADAAVYFFRPLEPAEELRAQYFSAEAKGPILDLRTKLATLEWEGHAINDAIKASATAHGVKMPKVAMPLRVMVTGEAQTPAINAVLELLGREETLRRMDRQLEYFLS</sequence>
<keyword id="KW-0030">Aminoacyl-tRNA synthetase</keyword>
<keyword id="KW-0067">ATP-binding</keyword>
<keyword id="KW-0963">Cytoplasm</keyword>
<keyword id="KW-0436">Ligase</keyword>
<keyword id="KW-0547">Nucleotide-binding</keyword>
<keyword id="KW-0648">Protein biosynthesis</keyword>
<keyword id="KW-1185">Reference proteome</keyword>
<proteinExistence type="inferred from homology"/>
<accession>Q2Y8L6</accession>
<gene>
    <name evidence="1" type="primary">gltX</name>
    <name type="ordered locus">Nmul_A1604</name>
</gene>
<organism>
    <name type="scientific">Nitrosospira multiformis (strain ATCC 25196 / NCIMB 11849 / C 71)</name>
    <dbReference type="NCBI Taxonomy" id="323848"/>
    <lineage>
        <taxon>Bacteria</taxon>
        <taxon>Pseudomonadati</taxon>
        <taxon>Pseudomonadota</taxon>
        <taxon>Betaproteobacteria</taxon>
        <taxon>Nitrosomonadales</taxon>
        <taxon>Nitrosomonadaceae</taxon>
        <taxon>Nitrosospira</taxon>
    </lineage>
</organism>